<accession>P11547</accession>
<reference key="1">
    <citation type="journal article" date="1985" name="Arch. Biochem. Biophys.">
        <title>Analysis of the 3' region of the sheep elastin gene.</title>
        <authorList>
            <person name="Yoon K."/>
            <person name="Davidson J.M."/>
            <person name="Boyd C."/>
            <person name="May M."/>
            <person name="LuValle P."/>
            <person name="Ornstein-Goldstein N."/>
            <person name="Smith J."/>
            <person name="Indik Z."/>
            <person name="Ross A."/>
            <person name="Golub E."/>
            <person name="Rosenbloom J."/>
        </authorList>
    </citation>
    <scope>NUCLEOTIDE SEQUENCE [GENOMIC DNA / MRNA]</scope>
</reference>
<organism>
    <name type="scientific">Ovis aries</name>
    <name type="common">Sheep</name>
    <dbReference type="NCBI Taxonomy" id="9940"/>
    <lineage>
        <taxon>Eukaryota</taxon>
        <taxon>Metazoa</taxon>
        <taxon>Chordata</taxon>
        <taxon>Craniata</taxon>
        <taxon>Vertebrata</taxon>
        <taxon>Euteleostomi</taxon>
        <taxon>Mammalia</taxon>
        <taxon>Eutheria</taxon>
        <taxon>Laurasiatheria</taxon>
        <taxon>Artiodactyla</taxon>
        <taxon>Ruminantia</taxon>
        <taxon>Pecora</taxon>
        <taxon>Bovidae</taxon>
        <taxon>Caprinae</taxon>
        <taxon>Ovis</taxon>
    </lineage>
</organism>
<keyword id="KW-1015">Disulfide bond</keyword>
<keyword id="KW-0272">Extracellular matrix</keyword>
<keyword id="KW-0379">Hydroxylation</keyword>
<keyword id="KW-1185">Reference proteome</keyword>
<keyword id="KW-0677">Repeat</keyword>
<keyword id="KW-0964">Secreted</keyword>
<dbReference type="EMBL" id="M26188">
    <property type="protein sequence ID" value="AAA31515.1"/>
    <property type="status" value="ALT_SEQ"/>
    <property type="molecule type" value="mRNA"/>
</dbReference>
<dbReference type="EMBL" id="M26189">
    <property type="protein sequence ID" value="AAA31516.1"/>
    <property type="molecule type" value="Genomic_DNA"/>
</dbReference>
<dbReference type="PIR" id="S59623">
    <property type="entry name" value="S59623"/>
</dbReference>
<dbReference type="Proteomes" id="UP000002356">
    <property type="component" value="Unplaced"/>
</dbReference>
<dbReference type="GO" id="GO:0005576">
    <property type="term" value="C:extracellular region"/>
    <property type="evidence" value="ECO:0007669"/>
    <property type="project" value="UniProtKB-KW"/>
</dbReference>
<protein>
    <recommendedName>
        <fullName>Elastin</fullName>
    </recommendedName>
    <alternativeName>
        <fullName>Tropoelastin</fullName>
    </alternativeName>
</protein>
<sequence length="100" mass="8662">FGLGGVGGLGVGGLGVGGLGAVPGAVGLGGVSPAAAAKAAKFGAAGLGGVLGAGRPFPIGGGAGGLGVGGKPPKPFGGALGALGFPGGACLGKSCGRKRK</sequence>
<feature type="chain" id="PRO_0000086957" description="Elastin">
    <location>
        <begin position="1" status="less than"/>
        <end position="100"/>
    </location>
</feature>
<feature type="modified residue" description="4-hydroxyproline" evidence="1">
    <location>
        <position position="72"/>
    </location>
</feature>
<feature type="modified residue" description="4-hydroxyproline" evidence="1">
    <location>
        <position position="86"/>
    </location>
</feature>
<feature type="disulfide bond" evidence="1">
    <location>
        <begin position="90"/>
        <end position="95"/>
    </location>
</feature>
<feature type="non-terminal residue">
    <location>
        <position position="1"/>
    </location>
</feature>
<evidence type="ECO:0000250" key="1"/>
<evidence type="ECO:0000250" key="2">
    <source>
        <dbReference type="UniProtKB" id="P04985"/>
    </source>
</evidence>
<evidence type="ECO:0000250" key="3">
    <source>
        <dbReference type="UniProtKB" id="P15502"/>
    </source>
</evidence>
<evidence type="ECO:0000250" key="4">
    <source>
        <dbReference type="UniProtKB" id="Q9WVH9"/>
    </source>
</evidence>
<evidence type="ECO:0000305" key="5"/>
<gene>
    <name type="primary">ELN</name>
</gene>
<proteinExistence type="evidence at transcript level"/>
<name>ELN_SHEEP</name>
<comment type="function">
    <text evidence="4">Major structural protein of tissues such as aorta and nuchal ligament, which must expand rapidly and recover completely. Molecular determinant of the late arterial morphogenesis, stabilizing arterial structure by regulating proliferation and organization of vascular smooth muscle (By similarity).</text>
</comment>
<comment type="subunit">
    <text evidence="2 3">The polymeric elastin chains are cross-linked together into an extensible 3D network. Forms a ternary complex with BGN and MFAP2. Interacts with MFAP2 via divalent cations (calcium &gt; magnesium &gt; manganese) in a dose-dependent and saturating manner. Interacts with FBLN5 and FBN1. Forms a ternary complex with FBN1 and FBLN2 or FBLN5. Interacts with MFAP4 in a Ca (2+)-dependent manner; this interaction promotes ELN self-assembly (By similarity). Interacts with EFEMP2 with moderate affinity (By similarity).</text>
</comment>
<comment type="subcellular location">
    <subcellularLocation>
        <location evidence="3">Secreted</location>
        <location evidence="3">Extracellular space</location>
        <location evidence="3">Extracellular matrix</location>
    </subcellularLocation>
    <text evidence="3">Extracellular matrix of elastic fibers.</text>
</comment>
<comment type="PTM">
    <text>Elastin is formed through the cross-linking of its soluble precursor tropoelastin. Cross-linking is initiated through the action of lysyl oxidase on exposed lysines to form allysine. Subsequent spontaneous condensation reactions with other allysine or unmodified lysine residues result in various bi-, tri-, and tetrafunctional cross-links. The most abundant cross-links in mature elastin fibers are lysinonorleucine, allysine aldol, desmosine, and isodesmosine.</text>
</comment>
<comment type="PTM">
    <text evidence="1">Hydroxylation on proline residues within the sequence motif, GXPG, is most likely to be 4-hydroxy as this fits the requirement for 4-hydroxylation in vertebrates.</text>
</comment>
<comment type="similarity">
    <text evidence="5">Belongs to the elastin family.</text>
</comment>